<sequence>MSNNYTSLSSSLDEEMGLKAGHEIDLEGSPPSEHNSEEKSTLPSNSDILTSANPVSQASETPDHSIESNTGSTQSPTSHSLLLKFSFCIVYYFYFAIVVLGCVLPFEHTHTFLIAFLVIFGIISVILFSGSIYYYETWTKTVKHFLKKVISPFKKEYIVCAFLKTFVFYGLLKTIEHFLVLLSGDKWGWKCSTLSSILTPVSCISFCLNESVQLRSCSTHLFINTVAWIKSLGGGKNAFENNYNQLNETSPEDLV</sequence>
<name>WTF15_SCHKA</name>
<gene>
    <name evidence="7" type="primary">wtf15</name>
</gene>
<accession>A0A482AT42</accession>
<keyword id="KW-0472">Membrane</keyword>
<keyword id="KW-0812">Transmembrane</keyword>
<keyword id="KW-1133">Transmembrane helix</keyword>
<reference evidence="7" key="1">
    <citation type="journal article" date="2020" name="PLoS Genet.">
        <title>Dramatically diverse Schizosaccharomyces pombe wtf meiotic drivers all display high gamete-killing efficiency.</title>
        <authorList>
            <person name="Bravo Nunez M.A."/>
            <person name="Sabbarini I.M."/>
            <person name="Eickbush M.T."/>
            <person name="Liang Y."/>
            <person name="Lange J.J."/>
            <person name="Kent A.M."/>
            <person name="Zanders S.E."/>
        </authorList>
    </citation>
    <scope>NUCLEOTIDE SEQUENCE [GENOMIC DNA]</scope>
    <scope>SUBCELLULAR LOCATION</scope>
</reference>
<organism evidence="7">
    <name type="scientific">Schizosaccharomyces kambucha</name>
    <name type="common">Fission yeast</name>
    <dbReference type="NCBI Taxonomy" id="204045"/>
    <lineage>
        <taxon>Eukaryota</taxon>
        <taxon>Fungi</taxon>
        <taxon>Dikarya</taxon>
        <taxon>Ascomycota</taxon>
        <taxon>Taphrinomycotina</taxon>
        <taxon>Schizosaccharomycetes</taxon>
        <taxon>Schizosaccharomycetales</taxon>
        <taxon>Schizosaccharomycetaceae</taxon>
        <taxon>Schizosaccharomyces</taxon>
    </lineage>
</organism>
<comment type="function">
    <text evidence="1">May act in meiotic drive.</text>
</comment>
<comment type="subcellular location">
    <subcellularLocation>
        <location evidence="2 4">Spore membrane</location>
        <topology evidence="2">Multi-pass membrane protein</topology>
    </subcellularLocation>
</comment>
<comment type="similarity">
    <text evidence="6">Belongs to the WTF family.</text>
</comment>
<protein>
    <recommendedName>
        <fullName evidence="5">Wtf element wtf15</fullName>
    </recommendedName>
</protein>
<proteinExistence type="inferred from homology"/>
<evidence type="ECO:0000250" key="1">
    <source>
        <dbReference type="UniProtKB" id="A0A218N034"/>
    </source>
</evidence>
<evidence type="ECO:0000255" key="2"/>
<evidence type="ECO:0000256" key="3">
    <source>
        <dbReference type="SAM" id="MobiDB-lite"/>
    </source>
</evidence>
<evidence type="ECO:0000269" key="4">
    <source>
    </source>
</evidence>
<evidence type="ECO:0000303" key="5">
    <source>
    </source>
</evidence>
<evidence type="ECO:0000305" key="6"/>
<evidence type="ECO:0000312" key="7">
    <source>
        <dbReference type="EMBL" id="QBL54505.1"/>
    </source>
</evidence>
<dbReference type="EMBL" id="MH837441">
    <property type="protein sequence ID" value="QBL54505.1"/>
    <property type="molecule type" value="Genomic_DNA"/>
</dbReference>
<dbReference type="SMR" id="A0A482AT42"/>
<dbReference type="GO" id="GO:0005737">
    <property type="term" value="C:cytoplasm"/>
    <property type="evidence" value="ECO:0000314"/>
    <property type="project" value="UniProtKB"/>
</dbReference>
<dbReference type="GO" id="GO:0016020">
    <property type="term" value="C:membrane"/>
    <property type="evidence" value="ECO:0007669"/>
    <property type="project" value="UniProtKB-KW"/>
</dbReference>
<dbReference type="GO" id="GO:0110134">
    <property type="term" value="P:meiotic drive"/>
    <property type="evidence" value="ECO:0007669"/>
    <property type="project" value="InterPro"/>
</dbReference>
<dbReference type="InterPro" id="IPR004982">
    <property type="entry name" value="WTF"/>
</dbReference>
<dbReference type="Pfam" id="PF03303">
    <property type="entry name" value="WTF"/>
    <property type="match status" value="1"/>
</dbReference>
<feature type="chain" id="PRO_0000452262" description="Wtf element wtf15">
    <location>
        <begin position="1"/>
        <end position="255"/>
    </location>
</feature>
<feature type="transmembrane region" description="Helical" evidence="2">
    <location>
        <begin position="85"/>
        <end position="105"/>
    </location>
</feature>
<feature type="transmembrane region" description="Helical" evidence="2">
    <location>
        <begin position="112"/>
        <end position="132"/>
    </location>
</feature>
<feature type="transmembrane region" description="Helical" evidence="2">
    <location>
        <begin position="162"/>
        <end position="182"/>
    </location>
</feature>
<feature type="region of interest" description="Disordered" evidence="3">
    <location>
        <begin position="19"/>
        <end position="78"/>
    </location>
</feature>
<feature type="compositionally biased region" description="Polar residues" evidence="3">
    <location>
        <begin position="41"/>
        <end position="60"/>
    </location>
</feature>
<feature type="compositionally biased region" description="Polar residues" evidence="3">
    <location>
        <begin position="67"/>
        <end position="78"/>
    </location>
</feature>